<keyword id="KW-1185">Reference proteome</keyword>
<keyword id="KW-0687">Ribonucleoprotein</keyword>
<keyword id="KW-0689">Ribosomal protein</keyword>
<keyword id="KW-0694">RNA-binding</keyword>
<keyword id="KW-0699">rRNA-binding</keyword>
<evidence type="ECO:0000255" key="1">
    <source>
        <dbReference type="HAMAP-Rule" id="MF_01369"/>
    </source>
</evidence>
<evidence type="ECO:0000305" key="2"/>
<gene>
    <name evidence="1" type="primary">rplW</name>
    <name evidence="1" type="synonym">rpl23</name>
    <name type="ordered locus">PMT_1734</name>
</gene>
<protein>
    <recommendedName>
        <fullName evidence="1">Large ribosomal subunit protein uL23</fullName>
    </recommendedName>
    <alternativeName>
        <fullName evidence="2">50S ribosomal protein L23</fullName>
    </alternativeName>
</protein>
<accession>Q7V540</accession>
<feature type="chain" id="PRO_0000272798" description="Large ribosomal subunit protein uL23">
    <location>
        <begin position="1"/>
        <end position="100"/>
    </location>
</feature>
<sequence>MTERFNDRLADVIRRPLITEKATSALEQNQYTFEVDHRAAKPDIKAAVEQLFDVRVVGISTMNPPRRSRRVGRFTGKRAQVKKAIVRLAEGNTIQLFPES</sequence>
<organism>
    <name type="scientific">Prochlorococcus marinus (strain MIT 9313)</name>
    <dbReference type="NCBI Taxonomy" id="74547"/>
    <lineage>
        <taxon>Bacteria</taxon>
        <taxon>Bacillati</taxon>
        <taxon>Cyanobacteriota</taxon>
        <taxon>Cyanophyceae</taxon>
        <taxon>Synechococcales</taxon>
        <taxon>Prochlorococcaceae</taxon>
        <taxon>Prochlorococcus</taxon>
    </lineage>
</organism>
<dbReference type="EMBL" id="BX548175">
    <property type="protein sequence ID" value="CAE21909.1"/>
    <property type="molecule type" value="Genomic_DNA"/>
</dbReference>
<dbReference type="RefSeq" id="WP_011131101.1">
    <property type="nucleotide sequence ID" value="NC_005071.1"/>
</dbReference>
<dbReference type="SMR" id="Q7V540"/>
<dbReference type="KEGG" id="pmt:PMT_1734"/>
<dbReference type="eggNOG" id="COG0089">
    <property type="taxonomic scope" value="Bacteria"/>
</dbReference>
<dbReference type="HOGENOM" id="CLU_037562_3_2_3"/>
<dbReference type="OrthoDB" id="9793353at2"/>
<dbReference type="Proteomes" id="UP000001423">
    <property type="component" value="Chromosome"/>
</dbReference>
<dbReference type="GO" id="GO:1990904">
    <property type="term" value="C:ribonucleoprotein complex"/>
    <property type="evidence" value="ECO:0007669"/>
    <property type="project" value="UniProtKB-KW"/>
</dbReference>
<dbReference type="GO" id="GO:0005840">
    <property type="term" value="C:ribosome"/>
    <property type="evidence" value="ECO:0007669"/>
    <property type="project" value="UniProtKB-KW"/>
</dbReference>
<dbReference type="GO" id="GO:0019843">
    <property type="term" value="F:rRNA binding"/>
    <property type="evidence" value="ECO:0007669"/>
    <property type="project" value="UniProtKB-UniRule"/>
</dbReference>
<dbReference type="GO" id="GO:0003735">
    <property type="term" value="F:structural constituent of ribosome"/>
    <property type="evidence" value="ECO:0007669"/>
    <property type="project" value="InterPro"/>
</dbReference>
<dbReference type="GO" id="GO:0006412">
    <property type="term" value="P:translation"/>
    <property type="evidence" value="ECO:0007669"/>
    <property type="project" value="UniProtKB-UniRule"/>
</dbReference>
<dbReference type="FunFam" id="3.30.70.330:FF:000001">
    <property type="entry name" value="50S ribosomal protein L23"/>
    <property type="match status" value="1"/>
</dbReference>
<dbReference type="Gene3D" id="3.30.70.330">
    <property type="match status" value="1"/>
</dbReference>
<dbReference type="HAMAP" id="MF_01369_B">
    <property type="entry name" value="Ribosomal_uL23_B"/>
    <property type="match status" value="1"/>
</dbReference>
<dbReference type="InterPro" id="IPR012677">
    <property type="entry name" value="Nucleotide-bd_a/b_plait_sf"/>
</dbReference>
<dbReference type="InterPro" id="IPR013025">
    <property type="entry name" value="Ribosomal_uL23-like"/>
</dbReference>
<dbReference type="InterPro" id="IPR012678">
    <property type="entry name" value="Ribosomal_uL23/eL15/eS24_sf"/>
</dbReference>
<dbReference type="InterPro" id="IPR001014">
    <property type="entry name" value="Ribosomal_uL23_CS"/>
</dbReference>
<dbReference type="NCBIfam" id="NF004363">
    <property type="entry name" value="PRK05738.2-4"/>
    <property type="match status" value="1"/>
</dbReference>
<dbReference type="NCBIfam" id="NF004365">
    <property type="entry name" value="PRK05738.3-1"/>
    <property type="match status" value="1"/>
</dbReference>
<dbReference type="NCBIfam" id="NF004366">
    <property type="entry name" value="PRK05738.3-2"/>
    <property type="match status" value="1"/>
</dbReference>
<dbReference type="NCBIfam" id="NF004368">
    <property type="entry name" value="PRK05738.3-4"/>
    <property type="match status" value="1"/>
</dbReference>
<dbReference type="PANTHER" id="PTHR11620">
    <property type="entry name" value="60S RIBOSOMAL PROTEIN L23A"/>
    <property type="match status" value="1"/>
</dbReference>
<dbReference type="Pfam" id="PF00276">
    <property type="entry name" value="Ribosomal_L23"/>
    <property type="match status" value="1"/>
</dbReference>
<dbReference type="SUPFAM" id="SSF54189">
    <property type="entry name" value="Ribosomal proteins S24e, L23 and L15e"/>
    <property type="match status" value="1"/>
</dbReference>
<dbReference type="PROSITE" id="PS00050">
    <property type="entry name" value="RIBOSOMAL_L23"/>
    <property type="match status" value="1"/>
</dbReference>
<proteinExistence type="inferred from homology"/>
<name>RL23_PROMM</name>
<comment type="function">
    <text evidence="1">One of the early assembly proteins it binds 23S rRNA. One of the proteins that surrounds the polypeptide exit tunnel on the outside of the ribosome. Forms the main docking site for trigger factor binding to the ribosome.</text>
</comment>
<comment type="subunit">
    <text evidence="1">Part of the 50S ribosomal subunit. Contacts protein L29, and trigger factor when it is bound to the ribosome.</text>
</comment>
<comment type="similarity">
    <text evidence="1">Belongs to the universal ribosomal protein uL23 family.</text>
</comment>
<reference key="1">
    <citation type="journal article" date="2003" name="Nature">
        <title>Genome divergence in two Prochlorococcus ecotypes reflects oceanic niche differentiation.</title>
        <authorList>
            <person name="Rocap G."/>
            <person name="Larimer F.W."/>
            <person name="Lamerdin J.E."/>
            <person name="Malfatti S."/>
            <person name="Chain P."/>
            <person name="Ahlgren N.A."/>
            <person name="Arellano A."/>
            <person name="Coleman M."/>
            <person name="Hauser L."/>
            <person name="Hess W.R."/>
            <person name="Johnson Z.I."/>
            <person name="Land M.L."/>
            <person name="Lindell D."/>
            <person name="Post A.F."/>
            <person name="Regala W."/>
            <person name="Shah M."/>
            <person name="Shaw S.L."/>
            <person name="Steglich C."/>
            <person name="Sullivan M.B."/>
            <person name="Ting C.S."/>
            <person name="Tolonen A."/>
            <person name="Webb E.A."/>
            <person name="Zinser E.R."/>
            <person name="Chisholm S.W."/>
        </authorList>
    </citation>
    <scope>NUCLEOTIDE SEQUENCE [LARGE SCALE GENOMIC DNA]</scope>
    <source>
        <strain>MIT 9313</strain>
    </source>
</reference>